<reference key="1">
    <citation type="journal article" date="1992" name="Cell">
        <title>Endocytosis in yeast: evidence for the involvement of a small GTP-binding protein (Ypt7p).</title>
        <authorList>
            <person name="Wichmann H."/>
            <person name="Hengst L."/>
            <person name="Gallwitz D."/>
        </authorList>
    </citation>
    <scope>NUCLEOTIDE SEQUENCE [GENOMIC DNA]</scope>
</reference>
<reference key="2">
    <citation type="journal article" date="1996" name="Protoplasma">
        <title>Mutational analysis of Vam4/Ypt7p function in the vacuolar biogenesis and morphogenesis in the yeast, Saccharomyces cerevisiae.</title>
        <authorList>
            <person name="Wada Y."/>
            <person name="Ohsumi Y."/>
            <person name="Kawai A."/>
            <person name="Ohsumi M."/>
        </authorList>
    </citation>
    <scope>NUCLEOTIDE SEQUENCE [GENOMIC DNA]</scope>
    <scope>MUTAGENESIS OF THR-22 AND GLN-68</scope>
    <source>
        <strain>ATCC 26786 / X2180-1A</strain>
    </source>
</reference>
<reference key="3">
    <citation type="journal article" date="1997" name="Nature">
        <title>The nucleotide sequence of Saccharomyces cerevisiae chromosome XIII.</title>
        <authorList>
            <person name="Bowman S."/>
            <person name="Churcher C.M."/>
            <person name="Badcock K."/>
            <person name="Brown D."/>
            <person name="Chillingworth T."/>
            <person name="Connor R."/>
            <person name="Dedman K."/>
            <person name="Devlin K."/>
            <person name="Gentles S."/>
            <person name="Hamlin N."/>
            <person name="Hunt S."/>
            <person name="Jagels K."/>
            <person name="Lye G."/>
            <person name="Moule S."/>
            <person name="Odell C."/>
            <person name="Pearson D."/>
            <person name="Rajandream M.A."/>
            <person name="Rice P."/>
            <person name="Skelton J."/>
            <person name="Walsh S.V."/>
            <person name="Whitehead S."/>
            <person name="Barrell B.G."/>
        </authorList>
    </citation>
    <scope>NUCLEOTIDE SEQUENCE [LARGE SCALE GENOMIC DNA]</scope>
    <source>
        <strain>ATCC 204508 / S288c</strain>
    </source>
</reference>
<reference key="4">
    <citation type="journal article" date="2014" name="G3 (Bethesda)">
        <title>The reference genome sequence of Saccharomyces cerevisiae: Then and now.</title>
        <authorList>
            <person name="Engel S.R."/>
            <person name="Dietrich F.S."/>
            <person name="Fisk D.G."/>
            <person name="Binkley G."/>
            <person name="Balakrishnan R."/>
            <person name="Costanzo M.C."/>
            <person name="Dwight S.S."/>
            <person name="Hitz B.C."/>
            <person name="Karra K."/>
            <person name="Nash R.S."/>
            <person name="Weng S."/>
            <person name="Wong E.D."/>
            <person name="Lloyd P."/>
            <person name="Skrzypek M.S."/>
            <person name="Miyasato S.R."/>
            <person name="Simison M."/>
            <person name="Cherry J.M."/>
        </authorList>
    </citation>
    <scope>GENOME REANNOTATION</scope>
    <source>
        <strain>ATCC 204508 / S288c</strain>
    </source>
</reference>
<reference key="5">
    <citation type="journal article" date="1992" name="J. Biol. Chem.">
        <title>Genes for directing vacuolar morphogenesis in Saccharomyces cerevisiae. I. Isolation and characterization of two classes of vam mutants.</title>
        <authorList>
            <person name="Wada Y."/>
            <person name="Ohsumi Y."/>
            <person name="Anraku Y."/>
        </authorList>
    </citation>
    <scope>GENE FAMILY</scope>
</reference>
<reference key="6">
    <citation type="journal article" date="1993" name="J. Cell Sci.">
        <title>Involvement of Ypt7p, a small GTPase, in traffic from late endosome to the vacuole in yeast.</title>
        <authorList>
            <person name="Schimmoeller F."/>
            <person name="Riezman H."/>
        </authorList>
    </citation>
    <scope>FUNCTION</scope>
    <scope>DISRUPTION PHENOTYPE</scope>
</reference>
<reference key="7">
    <citation type="journal article" date="1995" name="EMBO J.">
        <title>The GTPase Ypt7p of Saccharomyces cerevisiae is required on both partner vacuoles for the homotypic fusion step of vacuole inheritance.</title>
        <authorList>
            <person name="Haas A."/>
            <person name="Schegelmann D."/>
            <person name="Lazar T."/>
            <person name="Gallwitz D."/>
            <person name="Wickner W."/>
        </authorList>
    </citation>
    <scope>FUNCTION</scope>
    <scope>SUBCELLULAR LOCATION</scope>
</reference>
<reference key="8">
    <citation type="journal article" date="2000" name="EMBO J.">
        <title>Sequential action of two GTPases to promote vacuole docking and fusion.</title>
        <authorList>
            <person name="Eitzen G."/>
            <person name="Will E."/>
            <person name="Gallwitz D."/>
            <person name="Haas A."/>
            <person name="Wickner W."/>
        </authorList>
    </citation>
    <scope>FUNCTION</scope>
</reference>
<reference key="9">
    <citation type="journal article" date="2000" name="J. Cell Biol.">
        <title>The docking stage of yeast vacuole fusion requires the transfer of proteins from a cis-SNARE complex to a Rab/Ypt protein.</title>
        <authorList>
            <person name="Price A."/>
            <person name="Seals D."/>
            <person name="Wickner W."/>
            <person name="Ungermann C."/>
        </authorList>
    </citation>
    <scope>FUNCTION</scope>
</reference>
<reference key="10">
    <citation type="journal article" date="2000" name="J. Cell Biol.">
        <title>New component of the vacuolar class C-Vps complex couples nucleotide exchange on the Ypt7 GTPase to SNARE-dependent docking and fusion.</title>
        <authorList>
            <person name="Wurmser A.E."/>
            <person name="Sato T.K."/>
            <person name="Emr S.D."/>
        </authorList>
    </citation>
    <scope>FUNCTION</scope>
    <scope>ACTIVITY REGULATION</scope>
</reference>
<reference key="11">
    <citation type="journal article" date="2000" name="Proc. Natl. Acad. Sci. U.S.A.">
        <title>A Ypt/Rab effector complex containing the Sec1 homolog Vps33p is required for homotypic vacuole fusion.</title>
        <authorList>
            <person name="Seals D.F."/>
            <person name="Eitzen G."/>
            <person name="Margolis N."/>
            <person name="Wickner W.T."/>
            <person name="Price A."/>
        </authorList>
    </citation>
    <scope>FUNCTION</scope>
</reference>
<reference key="12">
    <citation type="journal article" date="2001" name="J. Cell Sci.">
        <title>The Ccz1 protein interacts with Ypt7 GTPase during fusion of multiple transport intermediates with the vacuole in S. cerevisiae.</title>
        <authorList>
            <person name="Kucharczyk R."/>
            <person name="Kierzek A.M."/>
            <person name="Slonimski P.P."/>
            <person name="Rytka J."/>
        </authorList>
    </citation>
    <scope>FUNCTION</scope>
    <scope>INTERACTION WITH CCZ1</scope>
    <scope>MUTAGENESIS OF LYS-127; ASP-129; THR-157 AND ALA-159</scope>
    <scope>CHARACTERIZATION OF THR-22 AND GLN-68</scope>
</reference>
<reference key="13">
    <citation type="journal article" date="2001" name="Methods Enzymol.">
        <title>Expression, purification, and biochemical properties of Ypt/Rab GTPase-activating proteins of Gyp family.</title>
        <authorList>
            <person name="Will E."/>
            <person name="Albert S."/>
            <person name="Gallwitz D."/>
        </authorList>
    </citation>
    <scope>FUNCTION</scope>
</reference>
<reference key="14">
    <citation type="journal article" date="2002" name="Biochem. Biophys. Res. Commun.">
        <title>Saccharomyces cerevisiae Pra1p/Yip3p interacts with Yip1p and Rab proteins.</title>
        <authorList>
            <person name="Calero M."/>
            <person name="Collins R.N."/>
        </authorList>
    </citation>
    <scope>INTERACTION WITH GDI1</scope>
</reference>
<reference key="15">
    <citation type="journal article" date="2002" name="Eur. J. Cell Biol.">
        <title>A novel phospholipid-binding protein from the yeast Saccharomyces cerevisiae with dual binding specificities for the transport GTPase Ypt7p and the Sec1-related Vps33p.</title>
        <authorList>
            <person name="Lazar T."/>
            <person name="Scheglmann D."/>
            <person name="Gallwitz D."/>
        </authorList>
    </citation>
    <scope>INTERACTION WITH IVY1</scope>
</reference>
<reference key="16">
    <citation type="journal article" date="2002" name="FEBS Lett.">
        <title>Identification of the novel proteins Yip4p and Yip5p as Rab GTPase interacting factors.</title>
        <authorList>
            <person name="Calero M."/>
            <person name="Winand N.J."/>
            <person name="Collins R.N."/>
        </authorList>
    </citation>
    <scope>INTERACTION WITH YIF1; YIP4 AND YIP5</scope>
</reference>
<reference key="17">
    <citation type="journal article" date="2003" name="Nature">
        <title>Global analysis of protein expression in yeast.</title>
        <authorList>
            <person name="Ghaemmaghami S."/>
            <person name="Huh W.-K."/>
            <person name="Bower K."/>
            <person name="Howson R.W."/>
            <person name="Belle A."/>
            <person name="Dephoure N."/>
            <person name="O'Shea E.K."/>
            <person name="Weissman J.S."/>
        </authorList>
    </citation>
    <scope>LEVEL OF PROTEIN EXPRESSION [LARGE SCALE ANALYSIS]</scope>
</reference>
<reference key="18">
    <citation type="journal article" date="2009" name="J. Biol. Chem.">
        <title>The major role of the Rab Ypt7p in vacuole fusion is supporting HOPS membrane association.</title>
        <authorList>
            <person name="Hickey C.M."/>
            <person name="Stroupe C."/>
            <person name="Wickner W."/>
        </authorList>
    </citation>
    <scope>FUNCTION</scope>
</reference>
<reference key="19">
    <citation type="journal article" date="2010" name="Curr. Biol.">
        <title>The Mon1-Ccz1 complex is the GEF of the late endosomal Rab7 homolog Ypt7.</title>
        <authorList>
            <person name="Nordmann M."/>
            <person name="Cabrera M."/>
            <person name="Perz A."/>
            <person name="Broecker C."/>
            <person name="Ostrowicz C."/>
            <person name="Engelbrecht-Vandre S."/>
            <person name="Ungermann C."/>
        </authorList>
    </citation>
    <scope>ACTIVITY REGULATION</scope>
</reference>
<reference key="20">
    <citation type="journal article" date="2010" name="J. Cell Sci.">
        <title>The Rab GTPase Ypt7 is linked to retromer-mediated receptor recycling and fusion at the yeast late endosome.</title>
        <authorList>
            <person name="Balderhaar H.J."/>
            <person name="Arlt H."/>
            <person name="Ostrowicz C."/>
            <person name="Broecker C."/>
            <person name="Suendermann F."/>
            <person name="Brandt R."/>
            <person name="Babst M."/>
            <person name="Ungermann C."/>
        </authorList>
    </citation>
    <scope>FUNCTION</scope>
    <scope>SUBCELLULAR LOCATION</scope>
</reference>
<reference key="21">
    <citation type="journal article" date="2012" name="Mol. Biol. Cell">
        <title>Rab GTPase regulation of retromer-mediated cargo export during endosome maturation.</title>
        <authorList>
            <person name="Liu T.T."/>
            <person name="Gomez T.S."/>
            <person name="Sackey B.K."/>
            <person name="Billadeau D.D."/>
            <person name="Burd C.G."/>
        </authorList>
    </citation>
    <scope>FUNCTION</scope>
    <scope>SUBCELLULAR LOCATION</scope>
</reference>
<reference key="22">
    <citation type="journal article" date="2012" name="Proteomics">
        <title>Sites of ubiquitin attachment in Saccharomyces cerevisiae.</title>
        <authorList>
            <person name="Starita L.M."/>
            <person name="Lo R.S."/>
            <person name="Eng J.K."/>
            <person name="von Haller P.D."/>
            <person name="Fields S."/>
        </authorList>
    </citation>
    <scope>UBIQUITINATION [LARGE SCALE ANALYSIS] AT LYS-147</scope>
    <scope>IDENTIFICATION BY MASS SPECTROMETRY [LARGE SCALE ANALYSIS]</scope>
</reference>
<reference key="23">
    <citation type="journal article" date="2014" name="Dev. Cell">
        <title>Cellular metabolism regulates contact sites between vacuoles and mitochondria.</title>
        <authorList>
            <person name="Hoenscher C."/>
            <person name="Mari M."/>
            <person name="Auffarth K."/>
            <person name="Bohnert M."/>
            <person name="Griffith J."/>
            <person name="Geerts W."/>
            <person name="van der Laan M."/>
            <person name="Cabrera M."/>
            <person name="Reggiori F."/>
            <person name="Ungermann C."/>
        </authorList>
    </citation>
    <scope>SUBCELLULAR LOCATION</scope>
    <scope>INTERACTION WITH VPS39</scope>
</reference>
<reference key="24">
    <citation type="journal article" date="2020" name="Elife">
        <title>A conserved and regulated mechanism drives endosomal Rab transition.</title>
        <authorList>
            <person name="Langemeyer L."/>
            <person name="Borchers A.C."/>
            <person name="Herrmann E."/>
            <person name="Fuellbrunn N."/>
            <person name="Han Y."/>
            <person name="Perz A."/>
            <person name="Auffarth K."/>
            <person name="Kuemmel D."/>
            <person name="Ungermann C."/>
        </authorList>
    </citation>
    <scope>SUBCELLULAR LOCATION</scope>
</reference>
<reference key="25">
    <citation type="journal article" date="2023" name="Proc. Natl. Acad. Sci. U.S.A.">
        <title>Regulatory sites in the Mon1-Ccz1 complex control Rab5 to Rab7 transition and endosome maturation.</title>
        <authorList>
            <person name="Borchers A.C."/>
            <person name="Janz M."/>
            <person name="Schaefer J.H."/>
            <person name="Moeller A."/>
            <person name="Kuemmel D."/>
            <person name="Paululat A."/>
            <person name="Ungermann C."/>
            <person name="Langemeyer L."/>
        </authorList>
    </citation>
    <scope>SUBCELLULAR LOCATION</scope>
</reference>
<reference key="26">
    <citation type="journal article" date="2002" name="Structure">
        <title>Rab-subfamily-specific regions of Ypt7p are structurally different from other RabGTPases.</title>
        <authorList>
            <person name="Constantinescu A.T."/>
            <person name="Rak A."/>
            <person name="Alexandrov K."/>
            <person name="Esters H."/>
            <person name="Goody R.S."/>
            <person name="Scheidig A.J."/>
        </authorList>
    </citation>
    <scope>X-RAY CRYSTALLOGRAPHY (1.35 ANGSTROMS) OF 1-182 IN COMPLEX WITH GTP</scope>
</reference>
<reference key="27">
    <citation type="journal article" date="2015" name="Nat. Commun.">
        <title>Locking GTPases covalently in their functional states.</title>
        <authorList>
            <person name="Wiegandt D."/>
            <person name="Vieweg S."/>
            <person name="Hofmann F."/>
            <person name="Koch D."/>
            <person name="Li F."/>
            <person name="Wu Y.W."/>
            <person name="Itzen A."/>
            <person name="Mueller M.P."/>
            <person name="Goody R.S."/>
        </authorList>
    </citation>
    <scope>X-RAY CRYSTALLOGRAPHY (1.90 ANGSTROMS) OF 1-182 IN COMPLEX WITH GTP</scope>
</reference>
<name>YPT7_YEAST</name>
<organism>
    <name type="scientific">Saccharomyces cerevisiae (strain ATCC 204508 / S288c)</name>
    <name type="common">Baker's yeast</name>
    <dbReference type="NCBI Taxonomy" id="559292"/>
    <lineage>
        <taxon>Eukaryota</taxon>
        <taxon>Fungi</taxon>
        <taxon>Dikarya</taxon>
        <taxon>Ascomycota</taxon>
        <taxon>Saccharomycotina</taxon>
        <taxon>Saccharomycetes</taxon>
        <taxon>Saccharomycetales</taxon>
        <taxon>Saccharomycetaceae</taxon>
        <taxon>Saccharomyces</taxon>
    </lineage>
</organism>
<evidence type="ECO:0000250" key="1">
    <source>
        <dbReference type="UniProtKB" id="P36586"/>
    </source>
</evidence>
<evidence type="ECO:0000269" key="2">
    <source>
    </source>
</evidence>
<evidence type="ECO:0000269" key="3">
    <source>
    </source>
</evidence>
<evidence type="ECO:0000269" key="4">
    <source>
    </source>
</evidence>
<evidence type="ECO:0000269" key="5">
    <source>
    </source>
</evidence>
<evidence type="ECO:0000269" key="6">
    <source>
    </source>
</evidence>
<evidence type="ECO:0000269" key="7">
    <source>
    </source>
</evidence>
<evidence type="ECO:0000269" key="8">
    <source>
    </source>
</evidence>
<evidence type="ECO:0000269" key="9">
    <source>
    </source>
</evidence>
<evidence type="ECO:0000269" key="10">
    <source>
    </source>
</evidence>
<evidence type="ECO:0000269" key="11">
    <source>
    </source>
</evidence>
<evidence type="ECO:0000269" key="12">
    <source>
    </source>
</evidence>
<evidence type="ECO:0000269" key="13">
    <source>
    </source>
</evidence>
<evidence type="ECO:0000269" key="14">
    <source>
    </source>
</evidence>
<evidence type="ECO:0000269" key="15">
    <source>
    </source>
</evidence>
<evidence type="ECO:0000269" key="16">
    <source>
    </source>
</evidence>
<evidence type="ECO:0000269" key="17">
    <source>
    </source>
</evidence>
<evidence type="ECO:0000269" key="18">
    <source>
    </source>
</evidence>
<evidence type="ECO:0000269" key="19">
    <source>
    </source>
</evidence>
<evidence type="ECO:0000269" key="20">
    <source>
    </source>
</evidence>
<evidence type="ECO:0000269" key="21">
    <source ref="2"/>
</evidence>
<evidence type="ECO:0000303" key="22">
    <source>
    </source>
</evidence>
<evidence type="ECO:0000305" key="23"/>
<evidence type="ECO:0000312" key="24">
    <source>
        <dbReference type="SGD" id="S000004460"/>
    </source>
</evidence>
<evidence type="ECO:0007744" key="25">
    <source>
        <dbReference type="PDB" id="1KY2"/>
    </source>
</evidence>
<evidence type="ECO:0007744" key="26">
    <source>
        <dbReference type="PDB" id="1KY3"/>
    </source>
</evidence>
<evidence type="ECO:0007744" key="27">
    <source>
        <dbReference type="PDB" id="4PHF"/>
    </source>
</evidence>
<evidence type="ECO:0007744" key="28">
    <source>
        <dbReference type="PDB" id="4PHG"/>
    </source>
</evidence>
<evidence type="ECO:0007744" key="29">
    <source>
    </source>
</evidence>
<evidence type="ECO:0007829" key="30">
    <source>
        <dbReference type="PDB" id="1KY2"/>
    </source>
</evidence>
<evidence type="ECO:0007829" key="31">
    <source>
        <dbReference type="PDB" id="1KY3"/>
    </source>
</evidence>
<keyword id="KW-0002">3D-structure</keyword>
<keyword id="KW-0967">Endosome</keyword>
<keyword id="KW-0342">GTP-binding</keyword>
<keyword id="KW-1017">Isopeptide bond</keyword>
<keyword id="KW-0449">Lipoprotein</keyword>
<keyword id="KW-0472">Membrane</keyword>
<keyword id="KW-0488">Methylation</keyword>
<keyword id="KW-0547">Nucleotide-binding</keyword>
<keyword id="KW-0636">Prenylation</keyword>
<keyword id="KW-0653">Protein transport</keyword>
<keyword id="KW-1185">Reference proteome</keyword>
<keyword id="KW-0813">Transport</keyword>
<keyword id="KW-0832">Ubl conjugation</keyword>
<keyword id="KW-0926">Vacuole</keyword>
<feature type="chain" id="PRO_0000121320" description="Ypt/Rab-type GTPase YPT7">
    <location>
        <begin position="1"/>
        <end position="208"/>
    </location>
</feature>
<feature type="short sequence motif" description="Effector region" evidence="23">
    <location>
        <begin position="37"/>
        <end position="45"/>
    </location>
</feature>
<feature type="binding site" evidence="25 26 27 28">
    <location>
        <begin position="17"/>
        <end position="23"/>
    </location>
    <ligand>
        <name>GTP</name>
        <dbReference type="ChEBI" id="CHEBI:37565"/>
    </ligand>
</feature>
<feature type="binding site" evidence="25 26 27 28">
    <location>
        <begin position="33"/>
        <end position="40"/>
    </location>
    <ligand>
        <name>GTP</name>
        <dbReference type="ChEBI" id="CHEBI:37565"/>
    </ligand>
</feature>
<feature type="binding site" evidence="25 28">
    <location>
        <position position="67"/>
    </location>
    <ligand>
        <name>GTP</name>
        <dbReference type="ChEBI" id="CHEBI:37565"/>
    </ligand>
</feature>
<feature type="binding site" evidence="25 26 27 28">
    <location>
        <begin position="126"/>
        <end position="129"/>
    </location>
    <ligand>
        <name>GTP</name>
        <dbReference type="ChEBI" id="CHEBI:37565"/>
    </ligand>
</feature>
<feature type="binding site" evidence="25 26 27 28">
    <location>
        <begin position="158"/>
        <end position="160"/>
    </location>
    <ligand>
        <name>GTP</name>
        <dbReference type="ChEBI" id="CHEBI:37565"/>
    </ligand>
</feature>
<feature type="modified residue" description="Cysteine methyl ester" evidence="1">
    <location>
        <position position="208"/>
    </location>
</feature>
<feature type="lipid moiety-binding region" description="S-geranylgeranyl cysteine" evidence="1">
    <location>
        <position position="206"/>
    </location>
</feature>
<feature type="lipid moiety-binding region" description="S-geranylgeranyl cysteine" evidence="1">
    <location>
        <position position="208"/>
    </location>
</feature>
<feature type="cross-link" description="Glycyl lysine isopeptide (Lys-Gly) (interchain with G-Cter in ubiquitin)" evidence="29">
    <location>
        <position position="147"/>
    </location>
</feature>
<feature type="mutagenesis site" description="Constitutively in the GDP-bound conformation. Causes loss of function during vacuolar morphogenesis. Does not suppress the zinc, caffeine and calcium sensitivity of CCZ1 mutants." evidence="7 21">
    <original>T</original>
    <variation>N</variation>
    <location>
        <position position="22"/>
    </location>
</feature>
<feature type="mutagenesis site" description="GTP-bound stabilized constitutively active mutant. Complements the fragmented vacuolar morphology of YPT7 null mutant cells. Does not suppress the zinc, caffeine and calcium sensitivity of CCZ1 mutants." evidence="7 21">
    <original>Q</original>
    <variation>L</variation>
    <location>
        <position position="68"/>
    </location>
</feature>
<feature type="mutagenesis site" description="Reduced nucleotide affinity leading to increased turnover between GDP- and GTP-bound states without the need of a guanine nucleotide-exchange factor. Suppresses the zinc, caffeine and calcium sensitivity of CCZ1 mutants." evidence="7">
    <original>K</original>
    <variation>E</variation>
    <location>
        <position position="127"/>
    </location>
</feature>
<feature type="mutagenesis site" description="Reduced nucleotide affinity leading to increased turnover between GDP- and GTP-bound states without the need of a guanine nucleotide-exchange factor. Suppresses the zinc, caffeine and calcium sensitivity of CCZ1 mutants." evidence="7">
    <original>D</original>
    <variation>G</variation>
    <variation>N</variation>
    <variation>A</variation>
    <location>
        <position position="129"/>
    </location>
</feature>
<feature type="mutagenesis site" description="Reduced nucleotide affinity leading to increased turnover between GDP- and GTP-bound states without the need of a guanine nucleotide-exchange factor. Suppresses the zinc, caffeine and calcium sensitivity of CCZ1 mutants." evidence="7">
    <original>T</original>
    <variation>P</variation>
    <location>
        <position position="157"/>
    </location>
</feature>
<feature type="mutagenesis site" description="Reduced nucleotide affinity leading to increased turnover between GDP- and GTP-bound states without the need of a guanine nucleotide-exchange factor. Suppresses the zinc, caffeine and calcium sensitivity of CCZ1 mutants." evidence="7">
    <original>A</original>
    <variation>P</variation>
    <location>
        <position position="159"/>
    </location>
</feature>
<feature type="strand" evidence="31">
    <location>
        <begin position="8"/>
        <end position="14"/>
    </location>
</feature>
<feature type="helix" evidence="31">
    <location>
        <begin position="21"/>
        <end position="30"/>
    </location>
</feature>
<feature type="strand" evidence="31">
    <location>
        <begin position="46"/>
        <end position="50"/>
    </location>
</feature>
<feature type="strand" evidence="31">
    <location>
        <begin position="53"/>
        <end position="55"/>
    </location>
</feature>
<feature type="strand" evidence="31">
    <location>
        <begin position="58"/>
        <end position="63"/>
    </location>
</feature>
<feature type="helix" evidence="30">
    <location>
        <begin position="69"/>
        <end position="71"/>
    </location>
</feature>
<feature type="turn" evidence="30">
    <location>
        <begin position="73"/>
        <end position="76"/>
    </location>
</feature>
<feature type="helix" evidence="30">
    <location>
        <begin position="77"/>
        <end position="79"/>
    </location>
</feature>
<feature type="strand" evidence="31">
    <location>
        <begin position="84"/>
        <end position="90"/>
    </location>
</feature>
<feature type="helix" evidence="31">
    <location>
        <begin position="94"/>
        <end position="98"/>
    </location>
</feature>
<feature type="helix" evidence="31">
    <location>
        <begin position="100"/>
        <end position="111"/>
    </location>
</feature>
<feature type="turn" evidence="31">
    <location>
        <begin position="116"/>
        <end position="118"/>
    </location>
</feature>
<feature type="strand" evidence="31">
    <location>
        <begin position="121"/>
        <end position="126"/>
    </location>
</feature>
<feature type="helix" evidence="31">
    <location>
        <begin position="132"/>
        <end position="134"/>
    </location>
</feature>
<feature type="helix" evidence="31">
    <location>
        <begin position="139"/>
        <end position="148"/>
    </location>
</feature>
<feature type="strand" evidence="31">
    <location>
        <begin position="154"/>
        <end position="158"/>
    </location>
</feature>
<feature type="turn" evidence="31">
    <location>
        <begin position="159"/>
        <end position="162"/>
    </location>
</feature>
<feature type="helix" evidence="31">
    <location>
        <begin position="165"/>
        <end position="180"/>
    </location>
</feature>
<accession>P32939</accession>
<accession>D6VZH4</accession>
<comment type="function">
    <text evidence="2 3 4 5 6 7 12 14 15 16 19 20 23">Ypt/Rab-type GTPases are key regulators of membrane trafficking and intracellular vesicular transport. They act as molecular switches that convert between GTP-bound and GDP-bound states, and regulate virtually all steps of membrane traffic from the formation of the transport vesicle at the donor membrane to its fusion at the target membrane. In the GDP-bound state, Ypt proteins are predominantly cytosolic, solubilized through the interaction with a GDP dissociation inhibitor (GDI). In the GTP-bound state, the proteins are membrane bound and interact with specific effector proteins that select cargo, promote vesicle movement, or verify the correct site of fusion (Probable). Involved in regulation of vesicular protein transport in exo- and endocytosis (PubMed:8308065). Involved in regulation of late endosome to vacuole trafficking and homotypic vacuole fusion, by interacting in its GTP-bound state on the donor membrane with the large multiprotein HOPS/class C-Vps tethering complex on the acceptor membrane (PubMed:10725336, PubMed:10944212, PubMed:11062257, PubMed:11118206, PubMed:11210571, PubMed:11590240, PubMed:19386605, PubMed:21062894, PubMed:7489715, PubMed:8308065). Involved in retromer assembly and cargo export, recognizing the cargo selection complex (CSC). GTP-bound YPT7 recruits CSC to vacuolar membranes via retromer subunit VPS35 (PubMed:22593205). Interacts with the HOPS complex subunit VPS39 independent of the HOPS complex at mitochondria-vacuole contact sites (vCLAMPs), providing a physical and metabolic interconnection between the endocytic pathway and mitochondria (PubMed:25026035).</text>
</comment>
<comment type="activity regulation">
    <text evidence="4 6 12 13 15">Rab activation is generally mediated by a guanine exchange factor (GEF), while inactivation through hydrolysis of bound GTP is catalyzed by a GTPase activating protein (GAP). YPT7 is activated by GEFs MON1-CCZ1 complex (MC1) and VAM6/VPS39, and inactivated by GAPs GYP7 and GYP1.</text>
</comment>
<comment type="subunit">
    <text evidence="3 4 5 7 8 9 10 12 15 16">Interacts with IVY1 (PubMed:12553664). Interacts with YIF1, YIP4 and YIP5 (PubMed:11943201). Interacts with the HOPS complex (PubMed:10944212, PubMed:19386605). Interacts with the class C-Vps complex (PubMed:11062257). Interacts with VPS35 (PubMed:22593205). Interacts with VPS39 (PubMed:25026035). Interacts with the GDP dissociation inhibitor GDI1 (PubMed:11118206, PubMed:11785952). Interacts with CCZ1 (PubMed:11590240).</text>
</comment>
<comment type="interaction">
    <interactant intactId="EBI-29509">
        <id>P32939</id>
    </interactant>
    <interactant intactId="EBI-7517">
        <id>P39958</id>
        <label>GDI1</label>
    </interactant>
    <organismsDiffer>false</organismsDiffer>
    <experiments>4</experiments>
</comment>
<comment type="interaction">
    <interactant intactId="EBI-29509">
        <id>P32939</id>
    </interactant>
    <interactant intactId="EBI-35255">
        <id>Q04934</id>
        <label>IVY1</label>
    </interactant>
    <organismsDiffer>false</organismsDiffer>
    <experiments>3</experiments>
</comment>
<comment type="interaction">
    <interactant intactId="EBI-29509">
        <id>P32939</id>
    </interactant>
    <interactant intactId="EBI-28230">
        <id>P53845</id>
        <label>YIF1</label>
    </interactant>
    <organismsDiffer>false</organismsDiffer>
    <experiments>2</experiments>
</comment>
<comment type="interaction">
    <interactant intactId="EBI-29509">
        <id>P32939</id>
    </interactant>
    <interactant intactId="EBI-24124">
        <id>P53093</id>
        <label>YIP4</label>
    </interactant>
    <organismsDiffer>false</organismsDiffer>
    <experiments>2</experiments>
</comment>
<comment type="subcellular location">
    <subcellularLocation>
        <location evidence="14">Late endosome</location>
    </subcellularLocation>
    <subcellularLocation>
        <location evidence="15 17 18 19">Vacuole membrane</location>
        <topology evidence="23">Lipid-anchor</topology>
        <orientation evidence="23">Cytoplasmic side</orientation>
    </subcellularLocation>
    <text evidence="16 17">Localizes to sites of contact between the vacuole and mitochondria (vCLAMPs). Vacuolar membrane localization requires the action of small GTPase Rab5 homologs such as YPT52, YPT10 or VPS21 (PubMed:32391792).</text>
</comment>
<comment type="disruption phenotype">
    <text evidence="20">Endocytosed alpha-factor accumulates in late endosomes.</text>
</comment>
<comment type="miscellaneous">
    <text evidence="11">Present with 5530 molecules/cell in log phase SD medium.</text>
</comment>
<comment type="similarity">
    <text evidence="23">Belongs to the small GTPase superfamily. Rab family.</text>
</comment>
<proteinExistence type="evidence at protein level"/>
<dbReference type="EMBL" id="X68144">
    <property type="protein sequence ID" value="CAA48244.1"/>
    <property type="molecule type" value="Genomic_DNA"/>
</dbReference>
<dbReference type="EMBL" id="D64114">
    <property type="protein sequence ID" value="BAA10973.1"/>
    <property type="molecule type" value="Genomic_DNA"/>
</dbReference>
<dbReference type="EMBL" id="Z48613">
    <property type="protein sequence ID" value="CAA88515.1"/>
    <property type="molecule type" value="Genomic_DNA"/>
</dbReference>
<dbReference type="EMBL" id="BK006946">
    <property type="protein sequence ID" value="DAA09898.1"/>
    <property type="molecule type" value="Genomic_DNA"/>
</dbReference>
<dbReference type="PIR" id="A44334">
    <property type="entry name" value="A44334"/>
</dbReference>
<dbReference type="RefSeq" id="NP_013713.1">
    <property type="nucleotide sequence ID" value="NM_001182356.1"/>
</dbReference>
<dbReference type="PDB" id="1KY2">
    <property type="method" value="X-ray"/>
    <property type="resolution" value="1.60 A"/>
    <property type="chains" value="A=1-182"/>
</dbReference>
<dbReference type="PDB" id="1KY3">
    <property type="method" value="X-ray"/>
    <property type="resolution" value="1.35 A"/>
    <property type="chains" value="A=1-182"/>
</dbReference>
<dbReference type="PDB" id="4PHF">
    <property type="method" value="X-ray"/>
    <property type="resolution" value="1.95 A"/>
    <property type="chains" value="A=1-182"/>
</dbReference>
<dbReference type="PDB" id="4PHG">
    <property type="method" value="X-ray"/>
    <property type="resolution" value="1.90 A"/>
    <property type="chains" value="A=1-182"/>
</dbReference>
<dbReference type="PDB" id="4PHH">
    <property type="method" value="X-ray"/>
    <property type="resolution" value="2.35 A"/>
    <property type="chains" value="A/B/C/D=1-182"/>
</dbReference>
<dbReference type="PDBsum" id="1KY2"/>
<dbReference type="PDBsum" id="1KY3"/>
<dbReference type="PDBsum" id="4PHF"/>
<dbReference type="PDBsum" id="4PHG"/>
<dbReference type="PDBsum" id="4PHH"/>
<dbReference type="SMR" id="P32939"/>
<dbReference type="BioGRID" id="35170">
    <property type="interactions" value="506"/>
</dbReference>
<dbReference type="DIP" id="DIP-1735N"/>
<dbReference type="FunCoup" id="P32939">
    <property type="interactions" value="1188"/>
</dbReference>
<dbReference type="IntAct" id="P32939">
    <property type="interactions" value="23"/>
</dbReference>
<dbReference type="MINT" id="P32939"/>
<dbReference type="STRING" id="4932.YML001W"/>
<dbReference type="TCDB" id="9.A.63.1.1">
    <property type="family name" value="the retromer-dependent vacuolar protein sorting (r-vps) family"/>
</dbReference>
<dbReference type="iPTMnet" id="P32939"/>
<dbReference type="PaxDb" id="4932-YML001W"/>
<dbReference type="PeptideAtlas" id="P32939"/>
<dbReference type="TopDownProteomics" id="P32939"/>
<dbReference type="EnsemblFungi" id="YML001W_mRNA">
    <property type="protein sequence ID" value="YML001W"/>
    <property type="gene ID" value="YML001W"/>
</dbReference>
<dbReference type="GeneID" id="855012"/>
<dbReference type="KEGG" id="sce:YML001W"/>
<dbReference type="AGR" id="SGD:S000004460"/>
<dbReference type="SGD" id="S000004460">
    <property type="gene designation" value="YPT7"/>
</dbReference>
<dbReference type="VEuPathDB" id="FungiDB:YML001W"/>
<dbReference type="eggNOG" id="KOG0394">
    <property type="taxonomic scope" value="Eukaryota"/>
</dbReference>
<dbReference type="GeneTree" id="ENSGT00940000166196"/>
<dbReference type="HOGENOM" id="CLU_041217_10_6_1"/>
<dbReference type="InParanoid" id="P32939"/>
<dbReference type="OMA" id="TSWKDEF"/>
<dbReference type="OrthoDB" id="9989112at2759"/>
<dbReference type="BioCyc" id="YEAST:G3O-32607-MONOMER"/>
<dbReference type="Reactome" id="R-SCE-6798695">
    <property type="pathway name" value="Neutrophil degranulation"/>
</dbReference>
<dbReference type="Reactome" id="R-SCE-8854214">
    <property type="pathway name" value="TBC/RABGAPs"/>
</dbReference>
<dbReference type="Reactome" id="R-SCE-8873719">
    <property type="pathway name" value="RAB geranylgeranylation"/>
</dbReference>
<dbReference type="Reactome" id="R-SCE-8876198">
    <property type="pathway name" value="RAB GEFs exchange GTP for GDP on RABs"/>
</dbReference>
<dbReference type="Reactome" id="R-SCE-9013405">
    <property type="pathway name" value="RHOD GTPase cycle"/>
</dbReference>
<dbReference type="Reactome" id="R-SCE-9013406">
    <property type="pathway name" value="RHOQ GTPase cycle"/>
</dbReference>
<dbReference type="BioGRID-ORCS" id="855012">
    <property type="hits" value="1 hit in 10 CRISPR screens"/>
</dbReference>
<dbReference type="EvolutionaryTrace" id="P32939"/>
<dbReference type="PRO" id="PR:P32939"/>
<dbReference type="Proteomes" id="UP000002311">
    <property type="component" value="Chromosome XIII"/>
</dbReference>
<dbReference type="RNAct" id="P32939">
    <property type="molecule type" value="protein"/>
</dbReference>
<dbReference type="GO" id="GO:0005829">
    <property type="term" value="C:cytosol"/>
    <property type="evidence" value="ECO:0007669"/>
    <property type="project" value="GOC"/>
</dbReference>
<dbReference type="GO" id="GO:0000324">
    <property type="term" value="C:fungal-type vacuole"/>
    <property type="evidence" value="ECO:0000314"/>
    <property type="project" value="SGD"/>
</dbReference>
<dbReference type="GO" id="GO:0000329">
    <property type="term" value="C:fungal-type vacuole membrane"/>
    <property type="evidence" value="ECO:0000314"/>
    <property type="project" value="SGD"/>
</dbReference>
<dbReference type="GO" id="GO:0005770">
    <property type="term" value="C:late endosome"/>
    <property type="evidence" value="ECO:0000318"/>
    <property type="project" value="GO_Central"/>
</dbReference>
<dbReference type="GO" id="GO:0005741">
    <property type="term" value="C:mitochondrial outer membrane"/>
    <property type="evidence" value="ECO:0007005"/>
    <property type="project" value="SGD"/>
</dbReference>
<dbReference type="GO" id="GO:0005739">
    <property type="term" value="C:mitochondrion"/>
    <property type="evidence" value="ECO:0007005"/>
    <property type="project" value="SGD"/>
</dbReference>
<dbReference type="GO" id="GO:0005771">
    <property type="term" value="C:multivesicular body"/>
    <property type="evidence" value="ECO:0000314"/>
    <property type="project" value="SGD"/>
</dbReference>
<dbReference type="GO" id="GO:0005773">
    <property type="term" value="C:vacuole"/>
    <property type="evidence" value="ECO:0000318"/>
    <property type="project" value="GO_Central"/>
</dbReference>
<dbReference type="GO" id="GO:1990816">
    <property type="term" value="C:vacuole-mitochondrion membrane contact site"/>
    <property type="evidence" value="ECO:0000314"/>
    <property type="project" value="SGD"/>
</dbReference>
<dbReference type="GO" id="GO:0005525">
    <property type="term" value="F:GTP binding"/>
    <property type="evidence" value="ECO:0007669"/>
    <property type="project" value="UniProtKB-KW"/>
</dbReference>
<dbReference type="GO" id="GO:0003924">
    <property type="term" value="F:GTPase activity"/>
    <property type="evidence" value="ECO:0000314"/>
    <property type="project" value="SGD"/>
</dbReference>
<dbReference type="GO" id="GO:0044877">
    <property type="term" value="F:protein-containing complex binding"/>
    <property type="evidence" value="ECO:0000314"/>
    <property type="project" value="SGD"/>
</dbReference>
<dbReference type="GO" id="GO:0032258">
    <property type="term" value="P:cytoplasm to vacuole targeting by the Cvt pathway"/>
    <property type="evidence" value="ECO:0000315"/>
    <property type="project" value="SGD"/>
</dbReference>
<dbReference type="GO" id="GO:0006897">
    <property type="term" value="P:endocytosis"/>
    <property type="evidence" value="ECO:0000315"/>
    <property type="project" value="SGD"/>
</dbReference>
<dbReference type="GO" id="GO:0016236">
    <property type="term" value="P:macroautophagy"/>
    <property type="evidence" value="ECO:0000315"/>
    <property type="project" value="SGD"/>
</dbReference>
<dbReference type="GO" id="GO:0034727">
    <property type="term" value="P:piecemeal microautophagy of the nucleus"/>
    <property type="evidence" value="ECO:0000315"/>
    <property type="project" value="SGD"/>
</dbReference>
<dbReference type="GO" id="GO:0072665">
    <property type="term" value="P:protein localization to vacuole"/>
    <property type="evidence" value="ECO:0000315"/>
    <property type="project" value="SGD"/>
</dbReference>
<dbReference type="GO" id="GO:0043254">
    <property type="term" value="P:regulation of protein-containing complex assembly"/>
    <property type="evidence" value="ECO:0000314"/>
    <property type="project" value="SGD"/>
</dbReference>
<dbReference type="GO" id="GO:0032889">
    <property type="term" value="P:regulation of vacuole fusion, non-autophagic"/>
    <property type="evidence" value="ECO:0000315"/>
    <property type="project" value="SGD"/>
</dbReference>
<dbReference type="GO" id="GO:0042147">
    <property type="term" value="P:retrograde transport, endosome to Golgi"/>
    <property type="evidence" value="ECO:0000353"/>
    <property type="project" value="SGD"/>
</dbReference>
<dbReference type="GO" id="GO:0000011">
    <property type="term" value="P:vacuole inheritance"/>
    <property type="evidence" value="ECO:0000314"/>
    <property type="project" value="SGD"/>
</dbReference>
<dbReference type="GO" id="GO:0016192">
    <property type="term" value="P:vesicle-mediated transport"/>
    <property type="evidence" value="ECO:0000314"/>
    <property type="project" value="SGD"/>
</dbReference>
<dbReference type="CDD" id="cd01862">
    <property type="entry name" value="Rab7"/>
    <property type="match status" value="1"/>
</dbReference>
<dbReference type="FunFam" id="3.40.50.300:FF:000086">
    <property type="entry name" value="Ras-related small GTPase"/>
    <property type="match status" value="1"/>
</dbReference>
<dbReference type="Gene3D" id="3.40.50.300">
    <property type="entry name" value="P-loop containing nucleotide triphosphate hydrolases"/>
    <property type="match status" value="1"/>
</dbReference>
<dbReference type="InterPro" id="IPR027417">
    <property type="entry name" value="P-loop_NTPase"/>
</dbReference>
<dbReference type="InterPro" id="IPR005225">
    <property type="entry name" value="Small_GTP-bd"/>
</dbReference>
<dbReference type="InterPro" id="IPR001806">
    <property type="entry name" value="Small_GTPase"/>
</dbReference>
<dbReference type="NCBIfam" id="TIGR00231">
    <property type="entry name" value="small_GTP"/>
    <property type="match status" value="1"/>
</dbReference>
<dbReference type="PANTHER" id="PTHR47981">
    <property type="entry name" value="RAB FAMILY"/>
    <property type="match status" value="1"/>
</dbReference>
<dbReference type="PANTHER" id="PTHR47981:SF20">
    <property type="entry name" value="RAS-RELATED PROTEIN RAB-7A"/>
    <property type="match status" value="1"/>
</dbReference>
<dbReference type="Pfam" id="PF00071">
    <property type="entry name" value="Ras"/>
    <property type="match status" value="1"/>
</dbReference>
<dbReference type="PRINTS" id="PR00449">
    <property type="entry name" value="RASTRNSFRMNG"/>
</dbReference>
<dbReference type="SMART" id="SM00175">
    <property type="entry name" value="RAB"/>
    <property type="match status" value="1"/>
</dbReference>
<dbReference type="SMART" id="SM00176">
    <property type="entry name" value="RAN"/>
    <property type="match status" value="1"/>
</dbReference>
<dbReference type="SMART" id="SM00173">
    <property type="entry name" value="RAS"/>
    <property type="match status" value="1"/>
</dbReference>
<dbReference type="SMART" id="SM00174">
    <property type="entry name" value="RHO"/>
    <property type="match status" value="1"/>
</dbReference>
<dbReference type="SUPFAM" id="SSF52540">
    <property type="entry name" value="P-loop containing nucleoside triphosphate hydrolases"/>
    <property type="match status" value="1"/>
</dbReference>
<dbReference type="PROSITE" id="PS51419">
    <property type="entry name" value="RAB"/>
    <property type="match status" value="1"/>
</dbReference>
<sequence length="208" mass="23043">MSSRKKNILKVIILGDSGVGKTSLMHRYVNDKYSQQYKATIGADFLTKEVTVDGDKVATMQVWDTAGQERFQSLGVAFYRGADCCVLVYDVTNASSFENIKSWRDEFLVHANVNSPETFPFVILGNKIDAEESKKIVSEKSAQELAKSLGDIPLFLTSAKNAINVDTAFEEIARSALQQNQADTEAFEDDYNDAINIRLDGENNSCSC</sequence>
<protein>
    <recommendedName>
        <fullName>Ypt/Rab-type GTPase YPT7</fullName>
        <shortName evidence="23">Ypt7p</shortName>
    </recommendedName>
    <alternativeName>
        <fullName evidence="22">Vacuolar morphology protein 4</fullName>
    </alternativeName>
</protein>
<gene>
    <name type="primary">YPT7</name>
    <name evidence="22" type="synonym">VAM4</name>
    <name evidence="24" type="ordered locus">YML001W</name>
    <name type="ORF">YM8270.02</name>
</gene>